<evidence type="ECO:0000255" key="1">
    <source>
        <dbReference type="HAMAP-Rule" id="MF_00359"/>
    </source>
</evidence>
<evidence type="ECO:0000305" key="2"/>
<feature type="chain" id="PRO_1000120690" description="Small ribosomal subunit protein eS1">
    <location>
        <begin position="1"/>
        <end position="200"/>
    </location>
</feature>
<organism>
    <name type="scientific">Thermococcus onnurineus (strain NA1)</name>
    <dbReference type="NCBI Taxonomy" id="523850"/>
    <lineage>
        <taxon>Archaea</taxon>
        <taxon>Methanobacteriati</taxon>
        <taxon>Methanobacteriota</taxon>
        <taxon>Thermococci</taxon>
        <taxon>Thermococcales</taxon>
        <taxon>Thermococcaceae</taxon>
        <taxon>Thermococcus</taxon>
    </lineage>
</organism>
<gene>
    <name evidence="1" type="primary">rps3ae</name>
    <name type="ordered locus">TON_0520</name>
</gene>
<proteinExistence type="inferred from homology"/>
<keyword id="KW-0687">Ribonucleoprotein</keyword>
<keyword id="KW-0689">Ribosomal protein</keyword>
<dbReference type="EMBL" id="CP000855">
    <property type="protein sequence ID" value="ACJ16007.1"/>
    <property type="molecule type" value="Genomic_DNA"/>
</dbReference>
<dbReference type="RefSeq" id="WP_012571479.1">
    <property type="nucleotide sequence ID" value="NC_011529.1"/>
</dbReference>
<dbReference type="SMR" id="B6YU65"/>
<dbReference type="STRING" id="523850.TON_0520"/>
<dbReference type="GeneID" id="7016818"/>
<dbReference type="KEGG" id="ton:TON_0520"/>
<dbReference type="PATRIC" id="fig|523850.10.peg.519"/>
<dbReference type="eggNOG" id="arCOG04186">
    <property type="taxonomic scope" value="Archaea"/>
</dbReference>
<dbReference type="HOGENOM" id="CLU_062507_1_0_2"/>
<dbReference type="OrthoDB" id="30639at2157"/>
<dbReference type="Proteomes" id="UP000002727">
    <property type="component" value="Chromosome"/>
</dbReference>
<dbReference type="GO" id="GO:1990904">
    <property type="term" value="C:ribonucleoprotein complex"/>
    <property type="evidence" value="ECO:0007669"/>
    <property type="project" value="UniProtKB-KW"/>
</dbReference>
<dbReference type="GO" id="GO:0005840">
    <property type="term" value="C:ribosome"/>
    <property type="evidence" value="ECO:0007669"/>
    <property type="project" value="UniProtKB-KW"/>
</dbReference>
<dbReference type="GO" id="GO:0003735">
    <property type="term" value="F:structural constituent of ribosome"/>
    <property type="evidence" value="ECO:0007669"/>
    <property type="project" value="InterPro"/>
</dbReference>
<dbReference type="GO" id="GO:0006412">
    <property type="term" value="P:translation"/>
    <property type="evidence" value="ECO:0007669"/>
    <property type="project" value="UniProtKB-UniRule"/>
</dbReference>
<dbReference type="HAMAP" id="MF_00359">
    <property type="entry name" value="Ribosomal_eS1"/>
    <property type="match status" value="1"/>
</dbReference>
<dbReference type="InterPro" id="IPR001593">
    <property type="entry name" value="Ribosomal_eS1"/>
</dbReference>
<dbReference type="InterPro" id="IPR030838">
    <property type="entry name" value="Ribosomal_eS1_arc"/>
</dbReference>
<dbReference type="InterPro" id="IPR018281">
    <property type="entry name" value="Ribosomal_eS1_CS"/>
</dbReference>
<dbReference type="NCBIfam" id="NF003142">
    <property type="entry name" value="PRK04057.1"/>
    <property type="match status" value="1"/>
</dbReference>
<dbReference type="Pfam" id="PF01015">
    <property type="entry name" value="Ribosomal_S3Ae"/>
    <property type="match status" value="1"/>
</dbReference>
<dbReference type="SMART" id="SM01397">
    <property type="entry name" value="Ribosomal_S3Ae"/>
    <property type="match status" value="1"/>
</dbReference>
<dbReference type="PROSITE" id="PS01191">
    <property type="entry name" value="RIBOSOMAL_S3AE"/>
    <property type="match status" value="1"/>
</dbReference>
<name>RS3A_THEON</name>
<accession>B6YU65</accession>
<reference key="1">
    <citation type="journal article" date="2008" name="J. Bacteriol.">
        <title>The complete genome sequence of Thermococcus onnurineus NA1 reveals a mixed heterotrophic and carboxydotrophic metabolism.</title>
        <authorList>
            <person name="Lee H.S."/>
            <person name="Kang S.G."/>
            <person name="Bae S.S."/>
            <person name="Lim J.K."/>
            <person name="Cho Y."/>
            <person name="Kim Y.J."/>
            <person name="Jeon J.H."/>
            <person name="Cha S.-S."/>
            <person name="Kwon K.K."/>
            <person name="Kim H.-T."/>
            <person name="Park C.-J."/>
            <person name="Lee H.-W."/>
            <person name="Kim S.I."/>
            <person name="Chun J."/>
            <person name="Colwell R.R."/>
            <person name="Kim S.-J."/>
            <person name="Lee J.-H."/>
        </authorList>
    </citation>
    <scope>NUCLEOTIDE SEQUENCE [LARGE SCALE GENOMIC DNA]</scope>
    <source>
        <strain>NA1</strain>
    </source>
</reference>
<comment type="similarity">
    <text evidence="1">Belongs to the eukaryotic ribosomal protein eS1 family.</text>
</comment>
<sequence>MAKGNPRKRAAATKDKWKMKEWYVVYAPDFFGNKEIGLTPADDPEKVIGRVIETTLKDLTGDFTKGQVKLYFQIYDVKGQNAYTKFKGHTLSRSYIRSLVRRRTTRVDGIFNITTKDGYKLRVMGMVIAYRRIQTSQERAIREIMRDIIYKKAEELNYKDFILEAVTGKMATEIAKEARKIYPIKRAEIRKIKVLAEPEA</sequence>
<protein>
    <recommendedName>
        <fullName evidence="1">Small ribosomal subunit protein eS1</fullName>
    </recommendedName>
    <alternativeName>
        <fullName evidence="2">30S ribosomal protein S3Ae</fullName>
    </alternativeName>
    <alternativeName>
        <fullName evidence="1">Ribosomal protein S1e</fullName>
    </alternativeName>
</protein>